<organism>
    <name type="scientific">Bordetella parapertussis (strain 12822 / ATCC BAA-587 / NCTC 13253)</name>
    <dbReference type="NCBI Taxonomy" id="257311"/>
    <lineage>
        <taxon>Bacteria</taxon>
        <taxon>Pseudomonadati</taxon>
        <taxon>Pseudomonadota</taxon>
        <taxon>Betaproteobacteria</taxon>
        <taxon>Burkholderiales</taxon>
        <taxon>Alcaligenaceae</taxon>
        <taxon>Bordetella</taxon>
    </lineage>
</organism>
<proteinExistence type="inferred from homology"/>
<gene>
    <name evidence="1" type="primary">cheB</name>
    <name type="ordered locus">BPP1476</name>
</gene>
<feature type="chain" id="PRO_0000157980" description="Protein-glutamate methylesterase/protein-glutamine glutaminase">
    <location>
        <begin position="1"/>
        <end position="350"/>
    </location>
</feature>
<feature type="domain" description="Response regulatory" evidence="1">
    <location>
        <begin position="5"/>
        <end position="122"/>
    </location>
</feature>
<feature type="domain" description="CheB-type methylesterase" evidence="1">
    <location>
        <begin position="152"/>
        <end position="346"/>
    </location>
</feature>
<feature type="active site" evidence="1">
    <location>
        <position position="165"/>
    </location>
</feature>
<feature type="active site" evidence="1">
    <location>
        <position position="191"/>
    </location>
</feature>
<feature type="active site" evidence="1">
    <location>
        <position position="288"/>
    </location>
</feature>
<feature type="modified residue" description="4-aspartylphosphate" evidence="1">
    <location>
        <position position="56"/>
    </location>
</feature>
<name>CHEB_BORPA</name>
<protein>
    <recommendedName>
        <fullName evidence="1">Protein-glutamate methylesterase/protein-glutamine glutaminase</fullName>
        <ecNumber evidence="1">3.1.1.61</ecNumber>
        <ecNumber evidence="1">3.5.1.44</ecNumber>
    </recommendedName>
</protein>
<reference key="1">
    <citation type="journal article" date="2003" name="Nat. Genet.">
        <title>Comparative analysis of the genome sequences of Bordetella pertussis, Bordetella parapertussis and Bordetella bronchiseptica.</title>
        <authorList>
            <person name="Parkhill J."/>
            <person name="Sebaihia M."/>
            <person name="Preston A."/>
            <person name="Murphy L.D."/>
            <person name="Thomson N.R."/>
            <person name="Harris D.E."/>
            <person name="Holden M.T.G."/>
            <person name="Churcher C.M."/>
            <person name="Bentley S.D."/>
            <person name="Mungall K.L."/>
            <person name="Cerdeno-Tarraga A.-M."/>
            <person name="Temple L."/>
            <person name="James K.D."/>
            <person name="Harris B."/>
            <person name="Quail M.A."/>
            <person name="Achtman M."/>
            <person name="Atkin R."/>
            <person name="Baker S."/>
            <person name="Basham D."/>
            <person name="Bason N."/>
            <person name="Cherevach I."/>
            <person name="Chillingworth T."/>
            <person name="Collins M."/>
            <person name="Cronin A."/>
            <person name="Davis P."/>
            <person name="Doggett J."/>
            <person name="Feltwell T."/>
            <person name="Goble A."/>
            <person name="Hamlin N."/>
            <person name="Hauser H."/>
            <person name="Holroyd S."/>
            <person name="Jagels K."/>
            <person name="Leather S."/>
            <person name="Moule S."/>
            <person name="Norberczak H."/>
            <person name="O'Neil S."/>
            <person name="Ormond D."/>
            <person name="Price C."/>
            <person name="Rabbinowitsch E."/>
            <person name="Rutter S."/>
            <person name="Sanders M."/>
            <person name="Saunders D."/>
            <person name="Seeger K."/>
            <person name="Sharp S."/>
            <person name="Simmonds M."/>
            <person name="Skelton J."/>
            <person name="Squares R."/>
            <person name="Squares S."/>
            <person name="Stevens K."/>
            <person name="Unwin L."/>
            <person name="Whitehead S."/>
            <person name="Barrell B.G."/>
            <person name="Maskell D.J."/>
        </authorList>
    </citation>
    <scope>NUCLEOTIDE SEQUENCE [LARGE SCALE GENOMIC DNA]</scope>
    <source>
        <strain>12822 / ATCC BAA-587 / NCTC 13253</strain>
    </source>
</reference>
<sequence>MKKIKVLCVDDSALVRGLMTEIINSHPDMEVVATAPDPLVARELIKKHNPDVLTLDVEMPRMDGLDFLEKLMRLRPMPVVMVSSLTERGGEITLRALELGAIDFVTKPKLGIRDGLIEYSEVIADKIRAASRARLRAPAPAGHAAPLRLRSPFASSEKLVIVGASTGGTEAIREVLQPLPADSPAILITQHMPAGFTRSFAQRLDALCAVTVREASDGERVLPGHVYLAPGGETHMRLGRSGANYVIGLQASEPVNRHRPSVDVLFHSAAEAAGGNAIGVILTGMGKDGAAGLLAMKRAGARTMAQDEASCVVFGMPREAIALGAADEVMPLADISERILTRLGDRGHRV</sequence>
<comment type="function">
    <text evidence="1">Involved in chemotaxis. Part of a chemotaxis signal transduction system that modulates chemotaxis in response to various stimuli. Catalyzes the demethylation of specific methylglutamate residues introduced into the chemoreceptors (methyl-accepting chemotaxis proteins or MCP) by CheR. Also mediates the irreversible deamidation of specific glutamine residues to glutamic acid.</text>
</comment>
<comment type="catalytic activity">
    <reaction evidence="1">
        <text>[protein]-L-glutamate 5-O-methyl ester + H2O = L-glutamyl-[protein] + methanol + H(+)</text>
        <dbReference type="Rhea" id="RHEA:23236"/>
        <dbReference type="Rhea" id="RHEA-COMP:10208"/>
        <dbReference type="Rhea" id="RHEA-COMP:10311"/>
        <dbReference type="ChEBI" id="CHEBI:15377"/>
        <dbReference type="ChEBI" id="CHEBI:15378"/>
        <dbReference type="ChEBI" id="CHEBI:17790"/>
        <dbReference type="ChEBI" id="CHEBI:29973"/>
        <dbReference type="ChEBI" id="CHEBI:82795"/>
        <dbReference type="EC" id="3.1.1.61"/>
    </reaction>
</comment>
<comment type="catalytic activity">
    <reaction evidence="1">
        <text>L-glutaminyl-[protein] + H2O = L-glutamyl-[protein] + NH4(+)</text>
        <dbReference type="Rhea" id="RHEA:16441"/>
        <dbReference type="Rhea" id="RHEA-COMP:10207"/>
        <dbReference type="Rhea" id="RHEA-COMP:10208"/>
        <dbReference type="ChEBI" id="CHEBI:15377"/>
        <dbReference type="ChEBI" id="CHEBI:28938"/>
        <dbReference type="ChEBI" id="CHEBI:29973"/>
        <dbReference type="ChEBI" id="CHEBI:30011"/>
        <dbReference type="EC" id="3.5.1.44"/>
    </reaction>
</comment>
<comment type="subcellular location">
    <subcellularLocation>
        <location evidence="1">Cytoplasm</location>
    </subcellularLocation>
</comment>
<comment type="domain">
    <text evidence="1">Contains a C-terminal catalytic domain, and an N-terminal region which modulates catalytic activity.</text>
</comment>
<comment type="PTM">
    <text evidence="1">Phosphorylated by CheA. Phosphorylation of the N-terminal regulatory domain activates the methylesterase activity.</text>
</comment>
<comment type="similarity">
    <text evidence="1">Belongs to the CheB family.</text>
</comment>
<dbReference type="EC" id="3.1.1.61" evidence="1"/>
<dbReference type="EC" id="3.5.1.44" evidence="1"/>
<dbReference type="EMBL" id="BX640427">
    <property type="protein sequence ID" value="CAE36778.1"/>
    <property type="molecule type" value="Genomic_DNA"/>
</dbReference>
<dbReference type="RefSeq" id="WP_010928056.1">
    <property type="nucleotide sequence ID" value="NC_002928.3"/>
</dbReference>
<dbReference type="SMR" id="Q7WAA4"/>
<dbReference type="GeneID" id="93203235"/>
<dbReference type="KEGG" id="bpa:BPP1476"/>
<dbReference type="HOGENOM" id="CLU_000445_51_0_4"/>
<dbReference type="Proteomes" id="UP000001421">
    <property type="component" value="Chromosome"/>
</dbReference>
<dbReference type="GO" id="GO:0005737">
    <property type="term" value="C:cytoplasm"/>
    <property type="evidence" value="ECO:0007669"/>
    <property type="project" value="UniProtKB-SubCell"/>
</dbReference>
<dbReference type="GO" id="GO:0000156">
    <property type="term" value="F:phosphorelay response regulator activity"/>
    <property type="evidence" value="ECO:0007669"/>
    <property type="project" value="InterPro"/>
</dbReference>
<dbReference type="GO" id="GO:0008984">
    <property type="term" value="F:protein-glutamate methylesterase activity"/>
    <property type="evidence" value="ECO:0007669"/>
    <property type="project" value="UniProtKB-UniRule"/>
</dbReference>
<dbReference type="GO" id="GO:0050568">
    <property type="term" value="F:protein-glutamine glutaminase activity"/>
    <property type="evidence" value="ECO:0007669"/>
    <property type="project" value="UniProtKB-UniRule"/>
</dbReference>
<dbReference type="GO" id="GO:0006935">
    <property type="term" value="P:chemotaxis"/>
    <property type="evidence" value="ECO:0007669"/>
    <property type="project" value="UniProtKB-UniRule"/>
</dbReference>
<dbReference type="CDD" id="cd16432">
    <property type="entry name" value="CheB_Rec"/>
    <property type="match status" value="1"/>
</dbReference>
<dbReference type="CDD" id="cd17541">
    <property type="entry name" value="REC_CheB-like"/>
    <property type="match status" value="1"/>
</dbReference>
<dbReference type="FunFam" id="3.40.50.180:FF:000001">
    <property type="entry name" value="Protein-glutamate methylesterase/protein-glutamine glutaminase"/>
    <property type="match status" value="1"/>
</dbReference>
<dbReference type="FunFam" id="3.40.50.2300:FF:000060">
    <property type="entry name" value="Protein-glutamate methylesterase/protein-glutamine glutaminase"/>
    <property type="match status" value="1"/>
</dbReference>
<dbReference type="Gene3D" id="3.40.50.2300">
    <property type="match status" value="1"/>
</dbReference>
<dbReference type="Gene3D" id="3.40.50.180">
    <property type="entry name" value="Methylesterase CheB, C-terminal domain"/>
    <property type="match status" value="1"/>
</dbReference>
<dbReference type="HAMAP" id="MF_00099">
    <property type="entry name" value="CheB_chemtxs"/>
    <property type="match status" value="1"/>
</dbReference>
<dbReference type="InterPro" id="IPR008248">
    <property type="entry name" value="CheB-like"/>
</dbReference>
<dbReference type="InterPro" id="IPR035909">
    <property type="entry name" value="CheB_C"/>
</dbReference>
<dbReference type="InterPro" id="IPR011006">
    <property type="entry name" value="CheY-like_superfamily"/>
</dbReference>
<dbReference type="InterPro" id="IPR000673">
    <property type="entry name" value="Sig_transdc_resp-reg_Me-estase"/>
</dbReference>
<dbReference type="InterPro" id="IPR001789">
    <property type="entry name" value="Sig_transdc_resp-reg_receiver"/>
</dbReference>
<dbReference type="NCBIfam" id="NF001965">
    <property type="entry name" value="PRK00742.1"/>
    <property type="match status" value="1"/>
</dbReference>
<dbReference type="NCBIfam" id="NF009206">
    <property type="entry name" value="PRK12555.1"/>
    <property type="match status" value="1"/>
</dbReference>
<dbReference type="PANTHER" id="PTHR42872">
    <property type="entry name" value="PROTEIN-GLUTAMATE METHYLESTERASE/PROTEIN-GLUTAMINE GLUTAMINASE"/>
    <property type="match status" value="1"/>
</dbReference>
<dbReference type="PANTHER" id="PTHR42872:SF6">
    <property type="entry name" value="PROTEIN-GLUTAMATE METHYLESTERASE_PROTEIN-GLUTAMINE GLUTAMINASE"/>
    <property type="match status" value="1"/>
</dbReference>
<dbReference type="Pfam" id="PF01339">
    <property type="entry name" value="CheB_methylest"/>
    <property type="match status" value="1"/>
</dbReference>
<dbReference type="Pfam" id="PF00072">
    <property type="entry name" value="Response_reg"/>
    <property type="match status" value="1"/>
</dbReference>
<dbReference type="PIRSF" id="PIRSF000876">
    <property type="entry name" value="RR_chemtxs_CheB"/>
    <property type="match status" value="1"/>
</dbReference>
<dbReference type="SMART" id="SM00448">
    <property type="entry name" value="REC"/>
    <property type="match status" value="1"/>
</dbReference>
<dbReference type="SUPFAM" id="SSF52172">
    <property type="entry name" value="CheY-like"/>
    <property type="match status" value="1"/>
</dbReference>
<dbReference type="SUPFAM" id="SSF52738">
    <property type="entry name" value="Methylesterase CheB, C-terminal domain"/>
    <property type="match status" value="1"/>
</dbReference>
<dbReference type="PROSITE" id="PS50122">
    <property type="entry name" value="CHEB"/>
    <property type="match status" value="1"/>
</dbReference>
<dbReference type="PROSITE" id="PS50110">
    <property type="entry name" value="RESPONSE_REGULATORY"/>
    <property type="match status" value="1"/>
</dbReference>
<accession>Q7WAA4</accession>
<evidence type="ECO:0000255" key="1">
    <source>
        <dbReference type="HAMAP-Rule" id="MF_00099"/>
    </source>
</evidence>
<keyword id="KW-0145">Chemotaxis</keyword>
<keyword id="KW-0963">Cytoplasm</keyword>
<keyword id="KW-0378">Hydrolase</keyword>
<keyword id="KW-0597">Phosphoprotein</keyword>